<keyword id="KW-0687">Ribonucleoprotein</keyword>
<keyword id="KW-0689">Ribosomal protein</keyword>
<keyword id="KW-0694">RNA-binding</keyword>
<keyword id="KW-0699">rRNA-binding</keyword>
<evidence type="ECO:0000255" key="1">
    <source>
        <dbReference type="HAMAP-Rule" id="MF_00537"/>
    </source>
</evidence>
<evidence type="ECO:0000305" key="2"/>
<organism>
    <name type="scientific">Neorickettsia sennetsu (strain ATCC VR-367 / Miyayama)</name>
    <name type="common">Ehrlichia sennetsu</name>
    <dbReference type="NCBI Taxonomy" id="222891"/>
    <lineage>
        <taxon>Bacteria</taxon>
        <taxon>Pseudomonadati</taxon>
        <taxon>Pseudomonadota</taxon>
        <taxon>Alphaproteobacteria</taxon>
        <taxon>Rickettsiales</taxon>
        <taxon>Anaplasmataceae</taxon>
        <taxon>Neorickettsia</taxon>
    </lineage>
</organism>
<proteinExistence type="inferred from homology"/>
<dbReference type="EMBL" id="CP000237">
    <property type="protein sequence ID" value="ABD45768.1"/>
    <property type="molecule type" value="Genomic_DNA"/>
</dbReference>
<dbReference type="RefSeq" id="WP_011451676.1">
    <property type="nucleotide sequence ID" value="NC_007798.1"/>
</dbReference>
<dbReference type="SMR" id="Q2GEC6"/>
<dbReference type="STRING" id="222891.NSE_0279"/>
<dbReference type="KEGG" id="nse:NSE_0279"/>
<dbReference type="eggNOG" id="COG0199">
    <property type="taxonomic scope" value="Bacteria"/>
</dbReference>
<dbReference type="HOGENOM" id="CLU_139869_0_1_5"/>
<dbReference type="OrthoDB" id="9810484at2"/>
<dbReference type="Proteomes" id="UP000001942">
    <property type="component" value="Chromosome"/>
</dbReference>
<dbReference type="GO" id="GO:0005737">
    <property type="term" value="C:cytoplasm"/>
    <property type="evidence" value="ECO:0007669"/>
    <property type="project" value="UniProtKB-ARBA"/>
</dbReference>
<dbReference type="GO" id="GO:0015935">
    <property type="term" value="C:small ribosomal subunit"/>
    <property type="evidence" value="ECO:0007669"/>
    <property type="project" value="TreeGrafter"/>
</dbReference>
<dbReference type="GO" id="GO:0019843">
    <property type="term" value="F:rRNA binding"/>
    <property type="evidence" value="ECO:0007669"/>
    <property type="project" value="UniProtKB-UniRule"/>
</dbReference>
<dbReference type="GO" id="GO:0003735">
    <property type="term" value="F:structural constituent of ribosome"/>
    <property type="evidence" value="ECO:0007669"/>
    <property type="project" value="InterPro"/>
</dbReference>
<dbReference type="GO" id="GO:0006412">
    <property type="term" value="P:translation"/>
    <property type="evidence" value="ECO:0007669"/>
    <property type="project" value="UniProtKB-UniRule"/>
</dbReference>
<dbReference type="FunFam" id="1.10.287.1480:FF:000001">
    <property type="entry name" value="30S ribosomal protein S14"/>
    <property type="match status" value="1"/>
</dbReference>
<dbReference type="Gene3D" id="1.10.287.1480">
    <property type="match status" value="1"/>
</dbReference>
<dbReference type="HAMAP" id="MF_00537">
    <property type="entry name" value="Ribosomal_uS14_1"/>
    <property type="match status" value="1"/>
</dbReference>
<dbReference type="InterPro" id="IPR001209">
    <property type="entry name" value="Ribosomal_uS14"/>
</dbReference>
<dbReference type="InterPro" id="IPR023036">
    <property type="entry name" value="Ribosomal_uS14_bac/plastid"/>
</dbReference>
<dbReference type="InterPro" id="IPR018271">
    <property type="entry name" value="Ribosomal_uS14_CS"/>
</dbReference>
<dbReference type="NCBIfam" id="NF006477">
    <property type="entry name" value="PRK08881.1"/>
    <property type="match status" value="1"/>
</dbReference>
<dbReference type="PANTHER" id="PTHR19836">
    <property type="entry name" value="30S RIBOSOMAL PROTEIN S14"/>
    <property type="match status" value="1"/>
</dbReference>
<dbReference type="PANTHER" id="PTHR19836:SF19">
    <property type="entry name" value="SMALL RIBOSOMAL SUBUNIT PROTEIN US14M"/>
    <property type="match status" value="1"/>
</dbReference>
<dbReference type="Pfam" id="PF00253">
    <property type="entry name" value="Ribosomal_S14"/>
    <property type="match status" value="1"/>
</dbReference>
<dbReference type="SUPFAM" id="SSF57716">
    <property type="entry name" value="Glucocorticoid receptor-like (DNA-binding domain)"/>
    <property type="match status" value="1"/>
</dbReference>
<dbReference type="PROSITE" id="PS00527">
    <property type="entry name" value="RIBOSOMAL_S14"/>
    <property type="match status" value="1"/>
</dbReference>
<comment type="function">
    <text evidence="1">Binds 16S rRNA, required for the assembly of 30S particles and may also be responsible for determining the conformation of the 16S rRNA at the A site.</text>
</comment>
<comment type="subunit">
    <text evidence="1">Part of the 30S ribosomal subunit. Contacts proteins S3 and S10.</text>
</comment>
<comment type="similarity">
    <text evidence="1">Belongs to the universal ribosomal protein uS14 family.</text>
</comment>
<accession>Q2GEC6</accession>
<feature type="chain" id="PRO_1000128463" description="Small ribosomal subunit protein uS14">
    <location>
        <begin position="1"/>
        <end position="101"/>
    </location>
</feature>
<name>RS14_NEOSM</name>
<gene>
    <name evidence="1" type="primary">rpsN</name>
    <name type="ordered locus">NSE_0279</name>
</gene>
<protein>
    <recommendedName>
        <fullName evidence="1">Small ribosomal subunit protein uS14</fullName>
    </recommendedName>
    <alternativeName>
        <fullName evidence="2">30S ribosomal protein S14</fullName>
    </alternativeName>
</protein>
<sequence>MAKKALVVKDERKRALACRSREKRSAVRNMRNDKTISLKERVAIQAKLNSLPRNSSPARSKNRCSITGRPRGYYRKFGISRIQLRVLANWGKLPGVVKSSW</sequence>
<reference key="1">
    <citation type="journal article" date="2006" name="PLoS Genet.">
        <title>Comparative genomics of emerging human ehrlichiosis agents.</title>
        <authorList>
            <person name="Dunning Hotopp J.C."/>
            <person name="Lin M."/>
            <person name="Madupu R."/>
            <person name="Crabtree J."/>
            <person name="Angiuoli S.V."/>
            <person name="Eisen J.A."/>
            <person name="Seshadri R."/>
            <person name="Ren Q."/>
            <person name="Wu M."/>
            <person name="Utterback T.R."/>
            <person name="Smith S."/>
            <person name="Lewis M."/>
            <person name="Khouri H."/>
            <person name="Zhang C."/>
            <person name="Niu H."/>
            <person name="Lin Q."/>
            <person name="Ohashi N."/>
            <person name="Zhi N."/>
            <person name="Nelson W.C."/>
            <person name="Brinkac L.M."/>
            <person name="Dodson R.J."/>
            <person name="Rosovitz M.J."/>
            <person name="Sundaram J.P."/>
            <person name="Daugherty S.C."/>
            <person name="Davidsen T."/>
            <person name="Durkin A.S."/>
            <person name="Gwinn M.L."/>
            <person name="Haft D.H."/>
            <person name="Selengut J.D."/>
            <person name="Sullivan S.A."/>
            <person name="Zafar N."/>
            <person name="Zhou L."/>
            <person name="Benahmed F."/>
            <person name="Forberger H."/>
            <person name="Halpin R."/>
            <person name="Mulligan S."/>
            <person name="Robinson J."/>
            <person name="White O."/>
            <person name="Rikihisa Y."/>
            <person name="Tettelin H."/>
        </authorList>
    </citation>
    <scope>NUCLEOTIDE SEQUENCE [LARGE SCALE GENOMIC DNA]</scope>
    <source>
        <strain>ATCC VR-367 / Miyayama</strain>
    </source>
</reference>